<feature type="chain" id="PRO_0000318954" description="Transmembrane protein 216">
    <location>
        <begin position="1"/>
        <end position="141"/>
    </location>
</feature>
<feature type="transmembrane region" description="Helical" evidence="3">
    <location>
        <begin position="15"/>
        <end position="35"/>
    </location>
</feature>
<feature type="transmembrane region" description="Helical" evidence="3">
    <location>
        <begin position="49"/>
        <end position="69"/>
    </location>
</feature>
<feature type="transmembrane region" description="Helical" evidence="3">
    <location>
        <begin position="82"/>
        <end position="102"/>
    </location>
</feature>
<feature type="transmembrane region" description="Helical" evidence="3">
    <location>
        <begin position="115"/>
        <end position="135"/>
    </location>
</feature>
<feature type="splice variant" id="VSP_042589" description="In isoform 2." evidence="4">
    <location>
        <begin position="1"/>
        <end position="54"/>
    </location>
</feature>
<organism>
    <name type="scientific">Bos taurus</name>
    <name type="common">Bovine</name>
    <dbReference type="NCBI Taxonomy" id="9913"/>
    <lineage>
        <taxon>Eukaryota</taxon>
        <taxon>Metazoa</taxon>
        <taxon>Chordata</taxon>
        <taxon>Craniata</taxon>
        <taxon>Vertebrata</taxon>
        <taxon>Euteleostomi</taxon>
        <taxon>Mammalia</taxon>
        <taxon>Eutheria</taxon>
        <taxon>Laurasiatheria</taxon>
        <taxon>Artiodactyla</taxon>
        <taxon>Ruminantia</taxon>
        <taxon>Pecora</taxon>
        <taxon>Bovidae</taxon>
        <taxon>Bovinae</taxon>
        <taxon>Bos</taxon>
    </lineage>
</organism>
<keyword id="KW-0025">Alternative splicing</keyword>
<keyword id="KW-0966">Cell projection</keyword>
<keyword id="KW-0970">Cilium biogenesis/degradation</keyword>
<keyword id="KW-0963">Cytoplasm</keyword>
<keyword id="KW-0206">Cytoskeleton</keyword>
<keyword id="KW-0472">Membrane</keyword>
<keyword id="KW-1185">Reference proteome</keyword>
<keyword id="KW-0812">Transmembrane</keyword>
<keyword id="KW-1133">Transmembrane helix</keyword>
<dbReference type="EMBL" id="DAAA02063463">
    <property type="status" value="NOT_ANNOTATED_CDS"/>
    <property type="molecule type" value="Genomic_DNA"/>
</dbReference>
<dbReference type="EMBL" id="BC111187">
    <property type="protein sequence ID" value="AAI11188.1"/>
    <property type="molecule type" value="mRNA"/>
</dbReference>
<dbReference type="RefSeq" id="NP_001160035.1">
    <molecule id="Q2TA01-2"/>
    <property type="nucleotide sequence ID" value="NM_001166563.2"/>
</dbReference>
<dbReference type="RefSeq" id="XP_005226951.1">
    <property type="nucleotide sequence ID" value="XM_005226894.3"/>
</dbReference>
<dbReference type="RefSeq" id="XP_010819304.1">
    <property type="nucleotide sequence ID" value="XM_010821002.2"/>
</dbReference>
<dbReference type="RefSeq" id="XP_015316719.1">
    <property type="nucleotide sequence ID" value="XM_015461233.1"/>
</dbReference>
<dbReference type="RefSeq" id="XP_059738802.1">
    <molecule id="Q2TA01-1"/>
    <property type="nucleotide sequence ID" value="XM_059882819.1"/>
</dbReference>
<dbReference type="SMR" id="Q2TA01"/>
<dbReference type="FunCoup" id="Q2TA01">
    <property type="interactions" value="2928"/>
</dbReference>
<dbReference type="STRING" id="9913.ENSBTAP00000028677"/>
<dbReference type="PaxDb" id="9913-ENSBTAP00000028677"/>
<dbReference type="GeneID" id="508031"/>
<dbReference type="KEGG" id="bta:508031"/>
<dbReference type="CTD" id="51259"/>
<dbReference type="VEuPathDB" id="HostDB:ENSBTAG00000021517"/>
<dbReference type="eggNOG" id="KOG4502">
    <property type="taxonomic scope" value="Eukaryota"/>
</dbReference>
<dbReference type="HOGENOM" id="CLU_135948_0_0_1"/>
<dbReference type="InParanoid" id="Q2TA01"/>
<dbReference type="OMA" id="AEILMFV"/>
<dbReference type="OrthoDB" id="262535at2759"/>
<dbReference type="TreeFam" id="TF323824"/>
<dbReference type="Reactome" id="R-BTA-5620912">
    <property type="pathway name" value="Anchoring of the basal body to the plasma membrane"/>
</dbReference>
<dbReference type="Proteomes" id="UP000009136">
    <property type="component" value="Chromosome 29"/>
</dbReference>
<dbReference type="Bgee" id="ENSBTAG00000021517">
    <property type="expression patterns" value="Expressed in oviduct epithelium and 104 other cell types or tissues"/>
</dbReference>
<dbReference type="GO" id="GO:0035869">
    <property type="term" value="C:ciliary transition zone"/>
    <property type="evidence" value="ECO:0000318"/>
    <property type="project" value="GO_Central"/>
</dbReference>
<dbReference type="GO" id="GO:0005929">
    <property type="term" value="C:cilium"/>
    <property type="evidence" value="ECO:0000250"/>
    <property type="project" value="UniProtKB"/>
</dbReference>
<dbReference type="GO" id="GO:0005737">
    <property type="term" value="C:cytoplasm"/>
    <property type="evidence" value="ECO:0007669"/>
    <property type="project" value="UniProtKB-KW"/>
</dbReference>
<dbReference type="GO" id="GO:0005856">
    <property type="term" value="C:cytoskeleton"/>
    <property type="evidence" value="ECO:0007669"/>
    <property type="project" value="UniProtKB-KW"/>
</dbReference>
<dbReference type="GO" id="GO:0016020">
    <property type="term" value="C:membrane"/>
    <property type="evidence" value="ECO:0007669"/>
    <property type="project" value="UniProtKB-SubCell"/>
</dbReference>
<dbReference type="GO" id="GO:0036038">
    <property type="term" value="C:MKS complex"/>
    <property type="evidence" value="ECO:0000250"/>
    <property type="project" value="UniProtKB"/>
</dbReference>
<dbReference type="GO" id="GO:0060271">
    <property type="term" value="P:cilium assembly"/>
    <property type="evidence" value="ECO:0000250"/>
    <property type="project" value="UniProtKB"/>
</dbReference>
<dbReference type="GO" id="GO:1905515">
    <property type="term" value="P:non-motile cilium assembly"/>
    <property type="evidence" value="ECO:0000318"/>
    <property type="project" value="GO_Central"/>
</dbReference>
<dbReference type="InterPro" id="IPR019184">
    <property type="entry name" value="Uncharacterised_TM-17"/>
</dbReference>
<dbReference type="PANTHER" id="PTHR13531">
    <property type="entry name" value="GEO07735P1-RELATED-RELATED"/>
    <property type="match status" value="1"/>
</dbReference>
<dbReference type="PANTHER" id="PTHR13531:SF5">
    <property type="entry name" value="TRANSMEMBRANE PROTEIN 216"/>
    <property type="match status" value="1"/>
</dbReference>
<dbReference type="Pfam" id="PF09799">
    <property type="entry name" value="Transmemb_17"/>
    <property type="match status" value="1"/>
</dbReference>
<sequence>MAPRGKRLSSTPLEILFFLNGWYYATYFLLELFIFLYKGLLLPYPTANLVLDVVMLFLYLGVEVIRLFFGTKGNLCQRKMPLGISVALTFPSTMMASYYLLLQTYVLRLEAIMNSILLFFCGSELLLEVLTLTAFSSMDRM</sequence>
<reference key="1">
    <citation type="journal article" date="2009" name="Genome Biol.">
        <title>A whole-genome assembly of the domestic cow, Bos taurus.</title>
        <authorList>
            <person name="Zimin A.V."/>
            <person name="Delcher A.L."/>
            <person name="Florea L."/>
            <person name="Kelley D.R."/>
            <person name="Schatz M.C."/>
            <person name="Puiu D."/>
            <person name="Hanrahan F."/>
            <person name="Pertea G."/>
            <person name="Van Tassell C.P."/>
            <person name="Sonstegard T.S."/>
            <person name="Marcais G."/>
            <person name="Roberts M."/>
            <person name="Subramanian P."/>
            <person name="Yorke J.A."/>
            <person name="Salzberg S.L."/>
        </authorList>
    </citation>
    <scope>NUCLEOTIDE SEQUENCE [LARGE SCALE GENOMIC DNA]</scope>
    <source>
        <strain>Hereford</strain>
    </source>
</reference>
<reference key="2">
    <citation type="submission" date="2005-12" db="EMBL/GenBank/DDBJ databases">
        <authorList>
            <consortium name="NIH - Mammalian Gene Collection (MGC) project"/>
        </authorList>
    </citation>
    <scope>NUCLEOTIDE SEQUENCE [LARGE SCALE MRNA] (ISOFORM 2)</scope>
    <source>
        <strain>Crossbred X Angus</strain>
        <tissue>Liver</tissue>
    </source>
</reference>
<proteinExistence type="evidence at transcript level"/>
<evidence type="ECO:0000250" key="1"/>
<evidence type="ECO:0000250" key="2">
    <source>
        <dbReference type="UniProtKB" id="Q9P0N5"/>
    </source>
</evidence>
<evidence type="ECO:0000255" key="3"/>
<evidence type="ECO:0000303" key="4">
    <source ref="2"/>
</evidence>
<evidence type="ECO:0000305" key="5"/>
<comment type="function">
    <text evidence="1">Part of the tectonic-like complex which is required for tissue-specific ciliogenesis and may regulate ciliary membrane composition.</text>
</comment>
<comment type="subunit">
    <text evidence="2">Part of the tectonic-like complex (also named B9 complex). Interacts with TMEM107.</text>
</comment>
<comment type="subcellular location">
    <subcellularLocation>
        <location evidence="5">Membrane</location>
        <topology evidence="5">Multi-pass membrane protein</topology>
    </subcellularLocation>
    <subcellularLocation>
        <location evidence="1">Cytoplasm</location>
        <location evidence="1">Cytoskeleton</location>
        <location evidence="1">Cilium basal body</location>
    </subcellularLocation>
    <text evidence="1">Localizes at the transition zone, a region between the basal body and the ciliary axoneme.</text>
</comment>
<comment type="alternative products">
    <event type="alternative splicing"/>
    <isoform>
        <id>Q2TA01-1</id>
        <name>1</name>
        <sequence type="displayed"/>
    </isoform>
    <isoform>
        <id>Q2TA01-2</id>
        <name>2</name>
        <sequence type="described" ref="VSP_042589"/>
    </isoform>
</comment>
<gene>
    <name type="primary">TMEM216</name>
</gene>
<accession>Q2TA01</accession>
<accession>G5E5R2</accession>
<protein>
    <recommendedName>
        <fullName>Transmembrane protein 216</fullName>
    </recommendedName>
</protein>
<name>TM216_BOVIN</name>